<name>SDN4_ARATH</name>
<comment type="function">
    <text>Putative 3'-5' exonuclease degrading single-stranded small RNAs.</text>
</comment>
<comment type="subcellular location">
    <subcellularLocation>
        <location evidence="2">Nucleus</location>
    </subcellularLocation>
</comment>
<comment type="disruption phenotype">
    <text evidence="1">Plants do not show a phenotype alteration due to the redundancy with other SDN ribonucleases.</text>
</comment>
<comment type="similarity">
    <text evidence="2">Belongs to the REXO1/REXO3 family.</text>
</comment>
<evidence type="ECO:0000269" key="1">
    <source>
    </source>
</evidence>
<evidence type="ECO:0000305" key="2"/>
<reference key="1">
    <citation type="journal article" date="2000" name="Nature">
        <title>Sequence and analysis of chromosome 3 of the plant Arabidopsis thaliana.</title>
        <authorList>
            <person name="Salanoubat M."/>
            <person name="Lemcke K."/>
            <person name="Rieger M."/>
            <person name="Ansorge W."/>
            <person name="Unseld M."/>
            <person name="Fartmann B."/>
            <person name="Valle G."/>
            <person name="Bloecker H."/>
            <person name="Perez-Alonso M."/>
            <person name="Obermaier B."/>
            <person name="Delseny M."/>
            <person name="Boutry M."/>
            <person name="Grivell L.A."/>
            <person name="Mache R."/>
            <person name="Puigdomenech P."/>
            <person name="De Simone V."/>
            <person name="Choisne N."/>
            <person name="Artiguenave F."/>
            <person name="Robert C."/>
            <person name="Brottier P."/>
            <person name="Wincker P."/>
            <person name="Cattolico L."/>
            <person name="Weissenbach J."/>
            <person name="Saurin W."/>
            <person name="Quetier F."/>
            <person name="Schaefer M."/>
            <person name="Mueller-Auer S."/>
            <person name="Gabel C."/>
            <person name="Fuchs M."/>
            <person name="Benes V."/>
            <person name="Wurmbach E."/>
            <person name="Drzonek H."/>
            <person name="Erfle H."/>
            <person name="Jordan N."/>
            <person name="Bangert S."/>
            <person name="Wiedelmann R."/>
            <person name="Kranz H."/>
            <person name="Voss H."/>
            <person name="Holland R."/>
            <person name="Brandt P."/>
            <person name="Nyakatura G."/>
            <person name="Vezzi A."/>
            <person name="D'Angelo M."/>
            <person name="Pallavicini A."/>
            <person name="Toppo S."/>
            <person name="Simionati B."/>
            <person name="Conrad A."/>
            <person name="Hornischer K."/>
            <person name="Kauer G."/>
            <person name="Loehnert T.-H."/>
            <person name="Nordsiek G."/>
            <person name="Reichelt J."/>
            <person name="Scharfe M."/>
            <person name="Schoen O."/>
            <person name="Bargues M."/>
            <person name="Terol J."/>
            <person name="Climent J."/>
            <person name="Navarro P."/>
            <person name="Collado C."/>
            <person name="Perez-Perez A."/>
            <person name="Ottenwaelder B."/>
            <person name="Duchemin D."/>
            <person name="Cooke R."/>
            <person name="Laudie M."/>
            <person name="Berger-Llauro C."/>
            <person name="Purnelle B."/>
            <person name="Masuy D."/>
            <person name="de Haan M."/>
            <person name="Maarse A.C."/>
            <person name="Alcaraz J.-P."/>
            <person name="Cottet A."/>
            <person name="Casacuberta E."/>
            <person name="Monfort A."/>
            <person name="Argiriou A."/>
            <person name="Flores M."/>
            <person name="Liguori R."/>
            <person name="Vitale D."/>
            <person name="Mannhaupt G."/>
            <person name="Haase D."/>
            <person name="Schoof H."/>
            <person name="Rudd S."/>
            <person name="Zaccaria P."/>
            <person name="Mewes H.-W."/>
            <person name="Mayer K.F.X."/>
            <person name="Kaul S."/>
            <person name="Town C.D."/>
            <person name="Koo H.L."/>
            <person name="Tallon L.J."/>
            <person name="Jenkins J."/>
            <person name="Rooney T."/>
            <person name="Rizzo M."/>
            <person name="Walts A."/>
            <person name="Utterback T."/>
            <person name="Fujii C.Y."/>
            <person name="Shea T.P."/>
            <person name="Creasy T.H."/>
            <person name="Haas B."/>
            <person name="Maiti R."/>
            <person name="Wu D."/>
            <person name="Peterson J."/>
            <person name="Van Aken S."/>
            <person name="Pai G."/>
            <person name="Militscher J."/>
            <person name="Sellers P."/>
            <person name="Gill J.E."/>
            <person name="Feldblyum T.V."/>
            <person name="Preuss D."/>
            <person name="Lin X."/>
            <person name="Nierman W.C."/>
            <person name="Salzberg S.L."/>
            <person name="White O."/>
            <person name="Venter J.C."/>
            <person name="Fraser C.M."/>
            <person name="Kaneko T."/>
            <person name="Nakamura Y."/>
            <person name="Sato S."/>
            <person name="Kato T."/>
            <person name="Asamizu E."/>
            <person name="Sasamoto S."/>
            <person name="Kimura T."/>
            <person name="Idesawa K."/>
            <person name="Kawashima K."/>
            <person name="Kishida Y."/>
            <person name="Kiyokawa C."/>
            <person name="Kohara M."/>
            <person name="Matsumoto M."/>
            <person name="Matsuno A."/>
            <person name="Muraki A."/>
            <person name="Nakayama S."/>
            <person name="Nakazaki N."/>
            <person name="Shinpo S."/>
            <person name="Takeuchi C."/>
            <person name="Wada T."/>
            <person name="Watanabe A."/>
            <person name="Yamada M."/>
            <person name="Yasuda M."/>
            <person name="Tabata S."/>
        </authorList>
    </citation>
    <scope>NUCLEOTIDE SEQUENCE [LARGE SCALE GENOMIC DNA]</scope>
    <source>
        <strain>cv. Columbia</strain>
    </source>
</reference>
<reference key="2">
    <citation type="journal article" date="2017" name="Plant J.">
        <title>Araport11: a complete reannotation of the Arabidopsis thaliana reference genome.</title>
        <authorList>
            <person name="Cheng C.Y."/>
            <person name="Krishnakumar V."/>
            <person name="Chan A.P."/>
            <person name="Thibaud-Nissen F."/>
            <person name="Schobel S."/>
            <person name="Town C.D."/>
        </authorList>
    </citation>
    <scope>GENOME REANNOTATION</scope>
    <source>
        <strain>cv. Columbia</strain>
    </source>
</reference>
<reference key="3">
    <citation type="journal article" date="2008" name="Science">
        <title>Degradation of microRNAs by a family of exoribonucleases in Arabidopsis.</title>
        <authorList>
            <person name="Ramachandran V."/>
            <person name="Chen X."/>
        </authorList>
    </citation>
    <scope>IDENTIFICATION</scope>
    <scope>DISRUPTION PHENOTYPE</scope>
</reference>
<gene>
    <name type="primary">SDN4</name>
    <name type="ordered locus">At3g50090</name>
    <name type="ORF">F3A4.170</name>
</gene>
<keyword id="KW-0269">Exonuclease</keyword>
<keyword id="KW-0378">Hydrolase</keyword>
<keyword id="KW-0540">Nuclease</keyword>
<keyword id="KW-0539">Nucleus</keyword>
<keyword id="KW-1185">Reference proteome</keyword>
<dbReference type="EC" id="3.1.-.-"/>
<dbReference type="EMBL" id="AL132978">
    <property type="protein sequence ID" value="CAB62117.1"/>
    <property type="molecule type" value="Genomic_DNA"/>
</dbReference>
<dbReference type="EMBL" id="CP002686">
    <property type="protein sequence ID" value="AEE78625.1"/>
    <property type="molecule type" value="Genomic_DNA"/>
</dbReference>
<dbReference type="PIR" id="T45862">
    <property type="entry name" value="T45862"/>
</dbReference>
<dbReference type="RefSeq" id="NP_190578.1">
    <property type="nucleotide sequence ID" value="NM_114869.1"/>
</dbReference>
<dbReference type="SMR" id="Q9SN09"/>
<dbReference type="FunCoup" id="Q9SN09">
    <property type="interactions" value="589"/>
</dbReference>
<dbReference type="STRING" id="3702.Q9SN09"/>
<dbReference type="PaxDb" id="3702-AT3G50090.1"/>
<dbReference type="EnsemblPlants" id="AT3G50090.1">
    <property type="protein sequence ID" value="AT3G50090.1"/>
    <property type="gene ID" value="AT3G50090"/>
</dbReference>
<dbReference type="GeneID" id="824171"/>
<dbReference type="Gramene" id="AT3G50090.1">
    <property type="protein sequence ID" value="AT3G50090.1"/>
    <property type="gene ID" value="AT3G50090"/>
</dbReference>
<dbReference type="KEGG" id="ath:AT3G50090"/>
<dbReference type="Araport" id="AT3G50090"/>
<dbReference type="TAIR" id="AT3G50090"/>
<dbReference type="eggNOG" id="KOG2248">
    <property type="taxonomic scope" value="Eukaryota"/>
</dbReference>
<dbReference type="HOGENOM" id="CLU_030142_0_0_1"/>
<dbReference type="InParanoid" id="Q9SN09"/>
<dbReference type="OMA" id="VSHDCVH"/>
<dbReference type="PhylomeDB" id="Q9SN09"/>
<dbReference type="PRO" id="PR:Q9SN09"/>
<dbReference type="Proteomes" id="UP000006548">
    <property type="component" value="Chromosome 3"/>
</dbReference>
<dbReference type="ExpressionAtlas" id="Q9SN09">
    <property type="expression patterns" value="baseline"/>
</dbReference>
<dbReference type="GO" id="GO:0005634">
    <property type="term" value="C:nucleus"/>
    <property type="evidence" value="ECO:0007669"/>
    <property type="project" value="UniProtKB-SubCell"/>
</dbReference>
<dbReference type="GO" id="GO:0004527">
    <property type="term" value="F:exonuclease activity"/>
    <property type="evidence" value="ECO:0007669"/>
    <property type="project" value="UniProtKB-KW"/>
</dbReference>
<dbReference type="GO" id="GO:0003676">
    <property type="term" value="F:nucleic acid binding"/>
    <property type="evidence" value="ECO:0007669"/>
    <property type="project" value="InterPro"/>
</dbReference>
<dbReference type="Gene3D" id="3.30.420.10">
    <property type="entry name" value="Ribonuclease H-like superfamily/Ribonuclease H"/>
    <property type="match status" value="1"/>
</dbReference>
<dbReference type="InterPro" id="IPR013520">
    <property type="entry name" value="Exonuclease_RNaseT/DNA_pol3"/>
</dbReference>
<dbReference type="InterPro" id="IPR047021">
    <property type="entry name" value="REXO1/3/4-like"/>
</dbReference>
<dbReference type="InterPro" id="IPR012337">
    <property type="entry name" value="RNaseH-like_sf"/>
</dbReference>
<dbReference type="InterPro" id="IPR036397">
    <property type="entry name" value="RNaseH_sf"/>
</dbReference>
<dbReference type="PANTHER" id="PTHR12801">
    <property type="entry name" value="RNA EXONUCLEASE REXO1 / RECO3 FAMILY MEMBER-RELATED"/>
    <property type="match status" value="1"/>
</dbReference>
<dbReference type="PANTHER" id="PTHR12801:SF145">
    <property type="entry name" value="SMALL RNA DEGRADING NUCLEASE 1-RELATED"/>
    <property type="match status" value="1"/>
</dbReference>
<dbReference type="SMART" id="SM00479">
    <property type="entry name" value="EXOIII"/>
    <property type="match status" value="1"/>
</dbReference>
<dbReference type="SUPFAM" id="SSF53098">
    <property type="entry name" value="Ribonuclease H-like"/>
    <property type="match status" value="1"/>
</dbReference>
<organism>
    <name type="scientific">Arabidopsis thaliana</name>
    <name type="common">Mouse-ear cress</name>
    <dbReference type="NCBI Taxonomy" id="3702"/>
    <lineage>
        <taxon>Eukaryota</taxon>
        <taxon>Viridiplantae</taxon>
        <taxon>Streptophyta</taxon>
        <taxon>Embryophyta</taxon>
        <taxon>Tracheophyta</taxon>
        <taxon>Spermatophyta</taxon>
        <taxon>Magnoliopsida</taxon>
        <taxon>eudicotyledons</taxon>
        <taxon>Gunneridae</taxon>
        <taxon>Pentapetalae</taxon>
        <taxon>rosids</taxon>
        <taxon>malvids</taxon>
        <taxon>Brassicales</taxon>
        <taxon>Brassicaceae</taxon>
        <taxon>Camelineae</taxon>
        <taxon>Arabidopsis</taxon>
    </lineage>
</organism>
<sequence>MDYLQAMRLREANRLMIAKFKKESPANDSPEQRLVRLTNENPQYNVDFLFHSYSKDWFVSDVGMKMSNVMIPNQMLALDCEMVLCEDGTEGVVRVGAVDRNLKVILDEFVKPHKPVVDYRTAITGVTAEDVQKATLSLVDIQEKLRPFLSAGAILIDHPIVIDTSLVFKYPNSRKLRRPSLNTLCMSVLGYEVQKAGVSHHCVHDAAAAMKLALAVIKKRVDTTITLTKEAEKSRLFLHRIPHHLSSEELKKDLALKFFPKNFTIDVKPAKTQGGYYCAVVIFGSSVEANQAFENVNGYKETDSSGLPQKLISCSISTFYVR</sequence>
<protein>
    <recommendedName>
        <fullName>Putative small RNA degrading nuclease 4</fullName>
        <ecNumber>3.1.-.-</ecNumber>
    </recommendedName>
</protein>
<feature type="chain" id="PRO_0000355087" description="Putative small RNA degrading nuclease 4">
    <location>
        <begin position="1"/>
        <end position="322"/>
    </location>
</feature>
<feature type="domain" description="Exonuclease">
    <location>
        <begin position="75"/>
        <end position="213"/>
    </location>
</feature>
<accession>Q9SN09</accession>
<proteinExistence type="inferred from homology"/>